<protein>
    <recommendedName>
        <fullName evidence="1">Small ribosomal subunit protein uS14B</fullName>
    </recommendedName>
    <alternativeName>
        <fullName evidence="2">30S ribosomal protein S14 type Z</fullName>
    </alternativeName>
</protein>
<comment type="function">
    <text evidence="1">Binds 16S rRNA, required for the assembly of 30S particles and may also be responsible for determining the conformation of the 16S rRNA at the A site.</text>
</comment>
<comment type="cofactor">
    <cofactor evidence="1">
        <name>Zn(2+)</name>
        <dbReference type="ChEBI" id="CHEBI:29105"/>
    </cofactor>
    <text evidence="1">Binds 1 zinc ion per subunit.</text>
</comment>
<comment type="subunit">
    <text evidence="1">Part of the 30S ribosomal subunit. Contacts proteins S3 and S10.</text>
</comment>
<comment type="similarity">
    <text evidence="1">Belongs to the universal ribosomal protein uS14 family. Zinc-binding uS14 subfamily.</text>
</comment>
<proteinExistence type="inferred from homology"/>
<evidence type="ECO:0000255" key="1">
    <source>
        <dbReference type="HAMAP-Rule" id="MF_01364"/>
    </source>
</evidence>
<evidence type="ECO:0000305" key="2"/>
<dbReference type="EMBL" id="AP007281">
    <property type="protein sequence ID" value="BAG25897.1"/>
    <property type="molecule type" value="Genomic_DNA"/>
</dbReference>
<dbReference type="RefSeq" id="WP_003664547.1">
    <property type="nucleotide sequence ID" value="NC_010609.1"/>
</dbReference>
<dbReference type="SMR" id="B2G8W5"/>
<dbReference type="KEGG" id="lrf:LAR_1381"/>
<dbReference type="HOGENOM" id="CLU_139869_3_0_9"/>
<dbReference type="GO" id="GO:0015935">
    <property type="term" value="C:small ribosomal subunit"/>
    <property type="evidence" value="ECO:0007669"/>
    <property type="project" value="TreeGrafter"/>
</dbReference>
<dbReference type="GO" id="GO:0019843">
    <property type="term" value="F:rRNA binding"/>
    <property type="evidence" value="ECO:0007669"/>
    <property type="project" value="UniProtKB-UniRule"/>
</dbReference>
<dbReference type="GO" id="GO:0003735">
    <property type="term" value="F:structural constituent of ribosome"/>
    <property type="evidence" value="ECO:0007669"/>
    <property type="project" value="InterPro"/>
</dbReference>
<dbReference type="GO" id="GO:0008270">
    <property type="term" value="F:zinc ion binding"/>
    <property type="evidence" value="ECO:0007669"/>
    <property type="project" value="UniProtKB-UniRule"/>
</dbReference>
<dbReference type="GO" id="GO:0006412">
    <property type="term" value="P:translation"/>
    <property type="evidence" value="ECO:0007669"/>
    <property type="project" value="UniProtKB-UniRule"/>
</dbReference>
<dbReference type="FunFam" id="4.10.830.10:FF:000001">
    <property type="entry name" value="30S ribosomal protein S14 type Z"/>
    <property type="match status" value="1"/>
</dbReference>
<dbReference type="Gene3D" id="4.10.830.10">
    <property type="entry name" value="30s Ribosomal Protein S14, Chain N"/>
    <property type="match status" value="1"/>
</dbReference>
<dbReference type="HAMAP" id="MF_01364_B">
    <property type="entry name" value="Ribosomal_uS14_2_B"/>
    <property type="match status" value="1"/>
</dbReference>
<dbReference type="InterPro" id="IPR001209">
    <property type="entry name" value="Ribosomal_uS14"/>
</dbReference>
<dbReference type="InterPro" id="IPR023053">
    <property type="entry name" value="Ribosomal_uS14_bact"/>
</dbReference>
<dbReference type="InterPro" id="IPR018271">
    <property type="entry name" value="Ribosomal_uS14_CS"/>
</dbReference>
<dbReference type="InterPro" id="IPR043140">
    <property type="entry name" value="Ribosomal_uS14_sf"/>
</dbReference>
<dbReference type="NCBIfam" id="NF005974">
    <property type="entry name" value="PRK08061.1"/>
    <property type="match status" value="1"/>
</dbReference>
<dbReference type="PANTHER" id="PTHR19836">
    <property type="entry name" value="30S RIBOSOMAL PROTEIN S14"/>
    <property type="match status" value="1"/>
</dbReference>
<dbReference type="PANTHER" id="PTHR19836:SF26">
    <property type="entry name" value="SMALL RIBOSOMAL SUBUNIT PROTEIN US14B"/>
    <property type="match status" value="1"/>
</dbReference>
<dbReference type="Pfam" id="PF00253">
    <property type="entry name" value="Ribosomal_S14"/>
    <property type="match status" value="1"/>
</dbReference>
<dbReference type="SUPFAM" id="SSF57716">
    <property type="entry name" value="Glucocorticoid receptor-like (DNA-binding domain)"/>
    <property type="match status" value="1"/>
</dbReference>
<dbReference type="PROSITE" id="PS00527">
    <property type="entry name" value="RIBOSOMAL_S14"/>
    <property type="match status" value="1"/>
</dbReference>
<sequence length="61" mass="7107">MAKKSMIAKCNRPAKFSSREYTRCARCGRPHSVYRKFHLCRICLRELAHKGQIPGLKKASW</sequence>
<reference key="1">
    <citation type="journal article" date="2008" name="DNA Res.">
        <title>Comparative genome analysis of Lactobacillus reuteri and Lactobacillus fermentum reveal a genomic island for reuterin and cobalamin production.</title>
        <authorList>
            <person name="Morita H."/>
            <person name="Toh H."/>
            <person name="Fukuda S."/>
            <person name="Horikawa H."/>
            <person name="Oshima K."/>
            <person name="Suzuki T."/>
            <person name="Murakami M."/>
            <person name="Hisamatsu S."/>
            <person name="Kato Y."/>
            <person name="Takizawa T."/>
            <person name="Fukuoka H."/>
            <person name="Yoshimura T."/>
            <person name="Itoh K."/>
            <person name="O'Sullivan D.J."/>
            <person name="McKay L.L."/>
            <person name="Ohno H."/>
            <person name="Kikuchi J."/>
            <person name="Masaoka T."/>
            <person name="Hattori M."/>
        </authorList>
    </citation>
    <scope>NUCLEOTIDE SEQUENCE [LARGE SCALE GENOMIC DNA]</scope>
    <source>
        <strain>JCM 1112</strain>
    </source>
</reference>
<feature type="chain" id="PRO_1000143911" description="Small ribosomal subunit protein uS14B">
    <location>
        <begin position="1"/>
        <end position="61"/>
    </location>
</feature>
<feature type="binding site" evidence="1">
    <location>
        <position position="24"/>
    </location>
    <ligand>
        <name>Zn(2+)</name>
        <dbReference type="ChEBI" id="CHEBI:29105"/>
    </ligand>
</feature>
<feature type="binding site" evidence="1">
    <location>
        <position position="27"/>
    </location>
    <ligand>
        <name>Zn(2+)</name>
        <dbReference type="ChEBI" id="CHEBI:29105"/>
    </ligand>
</feature>
<feature type="binding site" evidence="1">
    <location>
        <position position="40"/>
    </location>
    <ligand>
        <name>Zn(2+)</name>
        <dbReference type="ChEBI" id="CHEBI:29105"/>
    </ligand>
</feature>
<feature type="binding site" evidence="1">
    <location>
        <position position="43"/>
    </location>
    <ligand>
        <name>Zn(2+)</name>
        <dbReference type="ChEBI" id="CHEBI:29105"/>
    </ligand>
</feature>
<gene>
    <name evidence="1" type="primary">rpsZ</name>
    <name evidence="1" type="synonym">rpsN</name>
    <name type="ordered locus">LAR_1381</name>
</gene>
<accession>B2G8W5</accession>
<name>RS14Z_LIMRJ</name>
<keyword id="KW-0479">Metal-binding</keyword>
<keyword id="KW-0687">Ribonucleoprotein</keyword>
<keyword id="KW-0689">Ribosomal protein</keyword>
<keyword id="KW-0694">RNA-binding</keyword>
<keyword id="KW-0699">rRNA-binding</keyword>
<keyword id="KW-0862">Zinc</keyword>
<organism>
    <name type="scientific">Limosilactobacillus reuteri subsp. reuteri (strain JCM 1112)</name>
    <name type="common">Lactobacillus reuteri</name>
    <dbReference type="NCBI Taxonomy" id="557433"/>
    <lineage>
        <taxon>Bacteria</taxon>
        <taxon>Bacillati</taxon>
        <taxon>Bacillota</taxon>
        <taxon>Bacilli</taxon>
        <taxon>Lactobacillales</taxon>
        <taxon>Lactobacillaceae</taxon>
        <taxon>Limosilactobacillus</taxon>
    </lineage>
</organism>